<feature type="chain" id="PRO_1000200465" description="5-oxoprolinase subunit A">
    <location>
        <begin position="1"/>
        <end position="246"/>
    </location>
</feature>
<comment type="function">
    <text evidence="1">Catalyzes the cleavage of 5-oxoproline to form L-glutamate coupled to the hydrolysis of ATP to ADP and inorganic phosphate.</text>
</comment>
<comment type="catalytic activity">
    <reaction evidence="1">
        <text>5-oxo-L-proline + ATP + 2 H2O = L-glutamate + ADP + phosphate + H(+)</text>
        <dbReference type="Rhea" id="RHEA:10348"/>
        <dbReference type="ChEBI" id="CHEBI:15377"/>
        <dbReference type="ChEBI" id="CHEBI:15378"/>
        <dbReference type="ChEBI" id="CHEBI:29985"/>
        <dbReference type="ChEBI" id="CHEBI:30616"/>
        <dbReference type="ChEBI" id="CHEBI:43474"/>
        <dbReference type="ChEBI" id="CHEBI:58402"/>
        <dbReference type="ChEBI" id="CHEBI:456216"/>
        <dbReference type="EC" id="3.5.2.9"/>
    </reaction>
</comment>
<comment type="subunit">
    <text evidence="1">Forms a complex composed of PxpA, PxpB and PxpC.</text>
</comment>
<comment type="similarity">
    <text evidence="1">Belongs to the LamB/PxpA family.</text>
</comment>
<evidence type="ECO:0000255" key="1">
    <source>
        <dbReference type="HAMAP-Rule" id="MF_00691"/>
    </source>
</evidence>
<accession>C3LW40</accession>
<gene>
    <name evidence="1" type="primary">pxpA</name>
    <name type="ordered locus">VCM66_A0735</name>
</gene>
<dbReference type="EC" id="3.5.2.9" evidence="1"/>
<dbReference type="EMBL" id="CP001234">
    <property type="protein sequence ID" value="ACP07695.1"/>
    <property type="molecule type" value="Genomic_DNA"/>
</dbReference>
<dbReference type="RefSeq" id="WP_001882609.1">
    <property type="nucleotide sequence ID" value="NC_012580.1"/>
</dbReference>
<dbReference type="SMR" id="C3LW40"/>
<dbReference type="KEGG" id="vcm:VCM66_A0735"/>
<dbReference type="HOGENOM" id="CLU_069535_0_0_6"/>
<dbReference type="Proteomes" id="UP000001217">
    <property type="component" value="Chromosome II"/>
</dbReference>
<dbReference type="GO" id="GO:0017168">
    <property type="term" value="F:5-oxoprolinase (ATP-hydrolyzing) activity"/>
    <property type="evidence" value="ECO:0007669"/>
    <property type="project" value="UniProtKB-UniRule"/>
</dbReference>
<dbReference type="GO" id="GO:0005524">
    <property type="term" value="F:ATP binding"/>
    <property type="evidence" value="ECO:0007669"/>
    <property type="project" value="UniProtKB-UniRule"/>
</dbReference>
<dbReference type="GO" id="GO:0005975">
    <property type="term" value="P:carbohydrate metabolic process"/>
    <property type="evidence" value="ECO:0007669"/>
    <property type="project" value="InterPro"/>
</dbReference>
<dbReference type="CDD" id="cd10787">
    <property type="entry name" value="LamB_YcsF_like"/>
    <property type="match status" value="1"/>
</dbReference>
<dbReference type="Gene3D" id="3.20.20.370">
    <property type="entry name" value="Glycoside hydrolase/deacetylase"/>
    <property type="match status" value="1"/>
</dbReference>
<dbReference type="HAMAP" id="MF_00691">
    <property type="entry name" value="PxpA"/>
    <property type="match status" value="1"/>
</dbReference>
<dbReference type="InterPro" id="IPR011330">
    <property type="entry name" value="Glyco_hydro/deAcase_b/a-brl"/>
</dbReference>
<dbReference type="InterPro" id="IPR005501">
    <property type="entry name" value="LamB/YcsF/PxpA-like"/>
</dbReference>
<dbReference type="NCBIfam" id="NF003814">
    <property type="entry name" value="PRK05406.1-3"/>
    <property type="match status" value="1"/>
</dbReference>
<dbReference type="NCBIfam" id="NF003816">
    <property type="entry name" value="PRK05406.1-5"/>
    <property type="match status" value="1"/>
</dbReference>
<dbReference type="PANTHER" id="PTHR30292:SF0">
    <property type="entry name" value="5-OXOPROLINASE SUBUNIT A"/>
    <property type="match status" value="1"/>
</dbReference>
<dbReference type="PANTHER" id="PTHR30292">
    <property type="entry name" value="UNCHARACTERIZED PROTEIN YBGL-RELATED"/>
    <property type="match status" value="1"/>
</dbReference>
<dbReference type="Pfam" id="PF03746">
    <property type="entry name" value="LamB_YcsF"/>
    <property type="match status" value="1"/>
</dbReference>
<dbReference type="SUPFAM" id="SSF88713">
    <property type="entry name" value="Glycoside hydrolase/deacetylase"/>
    <property type="match status" value="1"/>
</dbReference>
<proteinExistence type="inferred from homology"/>
<reference key="1">
    <citation type="journal article" date="2008" name="PLoS ONE">
        <title>A recalibrated molecular clock and independent origins for the cholera pandemic clones.</title>
        <authorList>
            <person name="Feng L."/>
            <person name="Reeves P.R."/>
            <person name="Lan R."/>
            <person name="Ren Y."/>
            <person name="Gao C."/>
            <person name="Zhou Z."/>
            <person name="Ren Y."/>
            <person name="Cheng J."/>
            <person name="Wang W."/>
            <person name="Wang J."/>
            <person name="Qian W."/>
            <person name="Li D."/>
            <person name="Wang L."/>
        </authorList>
    </citation>
    <scope>NUCLEOTIDE SEQUENCE [LARGE SCALE GENOMIC DNA]</scope>
    <source>
        <strain>M66-2</strain>
    </source>
</reference>
<keyword id="KW-0067">ATP-binding</keyword>
<keyword id="KW-0378">Hydrolase</keyword>
<keyword id="KW-0547">Nucleotide-binding</keyword>
<protein>
    <recommendedName>
        <fullName evidence="1">5-oxoprolinase subunit A</fullName>
        <shortName evidence="1">5-OPase subunit A</shortName>
        <ecNumber evidence="1">3.5.2.9</ecNumber>
    </recommendedName>
    <alternativeName>
        <fullName evidence="1">5-oxoprolinase (ATP-hydrolyzing) subunit A</fullName>
    </alternativeName>
</protein>
<organism>
    <name type="scientific">Vibrio cholerae serotype O1 (strain M66-2)</name>
    <dbReference type="NCBI Taxonomy" id="579112"/>
    <lineage>
        <taxon>Bacteria</taxon>
        <taxon>Pseudomonadati</taxon>
        <taxon>Pseudomonadota</taxon>
        <taxon>Gammaproteobacteria</taxon>
        <taxon>Vibrionales</taxon>
        <taxon>Vibrionaceae</taxon>
        <taxon>Vibrio</taxon>
    </lineage>
</organism>
<name>PXPA_VIBCM</name>
<sequence>MSKRTIQLNCDMGESFGVWTMGADEEVMPWIDMANIACGFHASDPHVMSRTIDLALEHEVMIGAHPSYPDLQGFGRRSLAMNEQEVSEIILYQVGALKALCESKNGQLSYVKPHGALYNDMMSDPSIFRAVVDAVSCFNLPLMVLASANNQDYLDIADRFDVPLLFEAFADRTYLANGKLTPRSQPNAVLSSEEAILNQVRQIARYGKVTSSDGFVIPIEADTLCVHGDNPNAVSLIARIRAALDE</sequence>